<keyword id="KW-0131">Cell cycle</keyword>
<keyword id="KW-0132">Cell division</keyword>
<keyword id="KW-0133">Cell shape</keyword>
<keyword id="KW-0961">Cell wall biogenesis/degradation</keyword>
<keyword id="KW-0963">Cytoplasm</keyword>
<keyword id="KW-0274">FAD</keyword>
<keyword id="KW-0285">Flavoprotein</keyword>
<keyword id="KW-0521">NADP</keyword>
<keyword id="KW-0560">Oxidoreductase</keyword>
<keyword id="KW-0573">Peptidoglycan synthesis</keyword>
<evidence type="ECO:0000255" key="1">
    <source>
        <dbReference type="HAMAP-Rule" id="MF_00037"/>
    </source>
</evidence>
<reference key="1">
    <citation type="submission" date="2007-12" db="EMBL/GenBank/DDBJ databases">
        <title>Brucella suis ATCC 23445 whole genome shotgun sequencing project.</title>
        <authorList>
            <person name="Setubal J.C."/>
            <person name="Bowns C."/>
            <person name="Boyle S."/>
            <person name="Crasta O.R."/>
            <person name="Czar M.J."/>
            <person name="Dharmanolla C."/>
            <person name="Gillespie J.J."/>
            <person name="Kenyon R.W."/>
            <person name="Lu J."/>
            <person name="Mane S."/>
            <person name="Mohapatra S."/>
            <person name="Nagrani S."/>
            <person name="Purkayastha A."/>
            <person name="Rajasimha H.K."/>
            <person name="Shallom J.M."/>
            <person name="Shallom S."/>
            <person name="Shukla M."/>
            <person name="Snyder E.E."/>
            <person name="Sobral B.W."/>
            <person name="Wattam A.R."/>
            <person name="Will R."/>
            <person name="Williams K."/>
            <person name="Yoo H."/>
            <person name="Bruce D."/>
            <person name="Detter C."/>
            <person name="Munk C."/>
            <person name="Brettin T.S."/>
        </authorList>
    </citation>
    <scope>NUCLEOTIDE SEQUENCE [LARGE SCALE GENOMIC DNA]</scope>
    <source>
        <strain>ATCC 23445 / NCTC 10510</strain>
    </source>
</reference>
<gene>
    <name evidence="1" type="primary">murB</name>
    <name type="ordered locus">BSUIS_A1481</name>
</gene>
<organism>
    <name type="scientific">Brucella suis (strain ATCC 23445 / NCTC 10510)</name>
    <dbReference type="NCBI Taxonomy" id="470137"/>
    <lineage>
        <taxon>Bacteria</taxon>
        <taxon>Pseudomonadati</taxon>
        <taxon>Pseudomonadota</taxon>
        <taxon>Alphaproteobacteria</taxon>
        <taxon>Hyphomicrobiales</taxon>
        <taxon>Brucellaceae</taxon>
        <taxon>Brucella/Ochrobactrum group</taxon>
        <taxon>Brucella</taxon>
    </lineage>
</organism>
<sequence length="322" mass="34905">MMESGEALLKKLDGRLSGLRGRLTPDTGMDKITWFRAGGPAQVLFQPSDEEDLSAFLKAVPEEIPLLVVGIGSNLLVRDGGVPGFVVRLSAKGFGEVEQVCDTQLRAGAAAPDKRVAAAALEAGLAGFHFYHGIPGGIGGALRMNAGANGVETRERVVEVRALDRKGEVHVLSNADMGYAYRHSSASPDLIFTSVLFEGVPGERDDIRRAMDEVQHHRETVQPVREKTGGSTFKNPEGTSAWKEIDKAGCRGLRVGGAQMSEMHCNFMINTGNATGHDLETLGETVRARVFENSGIRLHWEIKRLGLFREGEQLEEFLGKII</sequence>
<protein>
    <recommendedName>
        <fullName evidence="1">UDP-N-acetylenolpyruvoylglucosamine reductase</fullName>
        <ecNumber evidence="1">1.3.1.98</ecNumber>
    </recommendedName>
    <alternativeName>
        <fullName evidence="1">UDP-N-acetylmuramate dehydrogenase</fullName>
    </alternativeName>
</protein>
<name>MURB_BRUSI</name>
<proteinExistence type="inferred from homology"/>
<accession>B0CHL8</accession>
<dbReference type="EC" id="1.3.1.98" evidence="1"/>
<dbReference type="EMBL" id="CP000911">
    <property type="protein sequence ID" value="ABY38519.1"/>
    <property type="molecule type" value="Genomic_DNA"/>
</dbReference>
<dbReference type="RefSeq" id="WP_006071125.1">
    <property type="nucleotide sequence ID" value="NC_010169.1"/>
</dbReference>
<dbReference type="SMR" id="B0CHL8"/>
<dbReference type="KEGG" id="bmt:BSUIS_A1481"/>
<dbReference type="HOGENOM" id="CLU_035304_1_0_5"/>
<dbReference type="UniPathway" id="UPA00219"/>
<dbReference type="Proteomes" id="UP000008545">
    <property type="component" value="Chromosome I"/>
</dbReference>
<dbReference type="GO" id="GO:0005829">
    <property type="term" value="C:cytosol"/>
    <property type="evidence" value="ECO:0007669"/>
    <property type="project" value="TreeGrafter"/>
</dbReference>
<dbReference type="GO" id="GO:0071949">
    <property type="term" value="F:FAD binding"/>
    <property type="evidence" value="ECO:0007669"/>
    <property type="project" value="InterPro"/>
</dbReference>
<dbReference type="GO" id="GO:0008762">
    <property type="term" value="F:UDP-N-acetylmuramate dehydrogenase activity"/>
    <property type="evidence" value="ECO:0007669"/>
    <property type="project" value="UniProtKB-UniRule"/>
</dbReference>
<dbReference type="GO" id="GO:0051301">
    <property type="term" value="P:cell division"/>
    <property type="evidence" value="ECO:0007669"/>
    <property type="project" value="UniProtKB-KW"/>
</dbReference>
<dbReference type="GO" id="GO:0071555">
    <property type="term" value="P:cell wall organization"/>
    <property type="evidence" value="ECO:0007669"/>
    <property type="project" value="UniProtKB-KW"/>
</dbReference>
<dbReference type="GO" id="GO:0009252">
    <property type="term" value="P:peptidoglycan biosynthetic process"/>
    <property type="evidence" value="ECO:0007669"/>
    <property type="project" value="UniProtKB-UniRule"/>
</dbReference>
<dbReference type="GO" id="GO:0008360">
    <property type="term" value="P:regulation of cell shape"/>
    <property type="evidence" value="ECO:0007669"/>
    <property type="project" value="UniProtKB-KW"/>
</dbReference>
<dbReference type="Gene3D" id="3.30.465.10">
    <property type="match status" value="1"/>
</dbReference>
<dbReference type="Gene3D" id="3.90.78.10">
    <property type="entry name" value="UDP-N-acetylenolpyruvoylglucosamine reductase, C-terminal domain"/>
    <property type="match status" value="1"/>
</dbReference>
<dbReference type="Gene3D" id="3.30.43.10">
    <property type="entry name" value="Uridine Diphospho-n-acetylenolpyruvylglucosamine Reductase, domain 2"/>
    <property type="match status" value="1"/>
</dbReference>
<dbReference type="HAMAP" id="MF_00037">
    <property type="entry name" value="MurB"/>
    <property type="match status" value="1"/>
</dbReference>
<dbReference type="InterPro" id="IPR016166">
    <property type="entry name" value="FAD-bd_PCMH"/>
</dbReference>
<dbReference type="InterPro" id="IPR036318">
    <property type="entry name" value="FAD-bd_PCMH-like_sf"/>
</dbReference>
<dbReference type="InterPro" id="IPR016167">
    <property type="entry name" value="FAD-bd_PCMH_sub1"/>
</dbReference>
<dbReference type="InterPro" id="IPR016169">
    <property type="entry name" value="FAD-bd_PCMH_sub2"/>
</dbReference>
<dbReference type="InterPro" id="IPR003170">
    <property type="entry name" value="MurB"/>
</dbReference>
<dbReference type="InterPro" id="IPR011601">
    <property type="entry name" value="MurB_C"/>
</dbReference>
<dbReference type="InterPro" id="IPR036635">
    <property type="entry name" value="MurB_C_sf"/>
</dbReference>
<dbReference type="InterPro" id="IPR006094">
    <property type="entry name" value="Oxid_FAD_bind_N"/>
</dbReference>
<dbReference type="NCBIfam" id="TIGR00179">
    <property type="entry name" value="murB"/>
    <property type="match status" value="1"/>
</dbReference>
<dbReference type="NCBIfam" id="NF010480">
    <property type="entry name" value="PRK13905.1"/>
    <property type="match status" value="1"/>
</dbReference>
<dbReference type="PANTHER" id="PTHR21071">
    <property type="entry name" value="UDP-N-ACETYLENOLPYRUVOYLGLUCOSAMINE REDUCTASE"/>
    <property type="match status" value="1"/>
</dbReference>
<dbReference type="PANTHER" id="PTHR21071:SF4">
    <property type="entry name" value="UDP-N-ACETYLENOLPYRUVOYLGLUCOSAMINE REDUCTASE"/>
    <property type="match status" value="1"/>
</dbReference>
<dbReference type="Pfam" id="PF01565">
    <property type="entry name" value="FAD_binding_4"/>
    <property type="match status" value="1"/>
</dbReference>
<dbReference type="Pfam" id="PF02873">
    <property type="entry name" value="MurB_C"/>
    <property type="match status" value="1"/>
</dbReference>
<dbReference type="SUPFAM" id="SSF56176">
    <property type="entry name" value="FAD-binding/transporter-associated domain-like"/>
    <property type="match status" value="1"/>
</dbReference>
<dbReference type="SUPFAM" id="SSF56194">
    <property type="entry name" value="Uridine diphospho-N-Acetylenolpyruvylglucosamine reductase, MurB, C-terminal domain"/>
    <property type="match status" value="1"/>
</dbReference>
<dbReference type="PROSITE" id="PS51387">
    <property type="entry name" value="FAD_PCMH"/>
    <property type="match status" value="1"/>
</dbReference>
<comment type="function">
    <text evidence="1">Cell wall formation.</text>
</comment>
<comment type="catalytic activity">
    <reaction evidence="1">
        <text>UDP-N-acetyl-alpha-D-muramate + NADP(+) = UDP-N-acetyl-3-O-(1-carboxyvinyl)-alpha-D-glucosamine + NADPH + H(+)</text>
        <dbReference type="Rhea" id="RHEA:12248"/>
        <dbReference type="ChEBI" id="CHEBI:15378"/>
        <dbReference type="ChEBI" id="CHEBI:57783"/>
        <dbReference type="ChEBI" id="CHEBI:58349"/>
        <dbReference type="ChEBI" id="CHEBI:68483"/>
        <dbReference type="ChEBI" id="CHEBI:70757"/>
        <dbReference type="EC" id="1.3.1.98"/>
    </reaction>
</comment>
<comment type="cofactor">
    <cofactor evidence="1">
        <name>FAD</name>
        <dbReference type="ChEBI" id="CHEBI:57692"/>
    </cofactor>
</comment>
<comment type="pathway">
    <text evidence="1">Cell wall biogenesis; peptidoglycan biosynthesis.</text>
</comment>
<comment type="subcellular location">
    <subcellularLocation>
        <location evidence="1">Cytoplasm</location>
    </subcellularLocation>
</comment>
<comment type="similarity">
    <text evidence="1">Belongs to the MurB family.</text>
</comment>
<feature type="chain" id="PRO_1000074517" description="UDP-N-acetylenolpyruvoylglucosamine reductase">
    <location>
        <begin position="1"/>
        <end position="322"/>
    </location>
</feature>
<feature type="domain" description="FAD-binding PCMH-type" evidence="1">
    <location>
        <begin position="36"/>
        <end position="202"/>
    </location>
</feature>
<feature type="active site" evidence="1">
    <location>
        <position position="182"/>
    </location>
</feature>
<feature type="active site" description="Proton donor" evidence="1">
    <location>
        <position position="231"/>
    </location>
</feature>
<feature type="active site" evidence="1">
    <location>
        <position position="301"/>
    </location>
</feature>